<dbReference type="EC" id="2.3.2.-"/>
<dbReference type="EMBL" id="AB091691">
    <property type="protein sequence ID" value="BAC55163.1"/>
    <property type="molecule type" value="mRNA"/>
</dbReference>
<dbReference type="EMBL" id="AB079383">
    <property type="protein sequence ID" value="BAC77060.1"/>
    <property type="molecule type" value="mRNA"/>
</dbReference>
<dbReference type="EMBL" id="AK017355">
    <property type="protein sequence ID" value="BAB30705.1"/>
    <property type="molecule type" value="mRNA"/>
</dbReference>
<dbReference type="EMBL" id="AK077333">
    <property type="protein sequence ID" value="BAC36756.1"/>
    <property type="molecule type" value="mRNA"/>
</dbReference>
<dbReference type="EMBL" id="BC023455">
    <property type="protein sequence ID" value="AAH23455.1"/>
    <property type="molecule type" value="mRNA"/>
</dbReference>
<dbReference type="RefSeq" id="NP_080046.3">
    <property type="nucleotide sequence ID" value="NM_025770.3"/>
</dbReference>
<dbReference type="RefSeq" id="XP_006517389.1">
    <property type="nucleotide sequence ID" value="XM_006517326.3"/>
</dbReference>
<dbReference type="SMR" id="Q8R1P4"/>
<dbReference type="BioGRID" id="211724">
    <property type="interactions" value="5"/>
</dbReference>
<dbReference type="FunCoup" id="Q8R1P4">
    <property type="interactions" value="835"/>
</dbReference>
<dbReference type="IntAct" id="Q8R1P4">
    <property type="interactions" value="3"/>
</dbReference>
<dbReference type="MINT" id="Q8R1P4"/>
<dbReference type="STRING" id="10090.ENSMUSP00000022119"/>
<dbReference type="iPTMnet" id="Q8R1P4"/>
<dbReference type="PhosphoSitePlus" id="Q8R1P4"/>
<dbReference type="PaxDb" id="10090-ENSMUSP00000022119"/>
<dbReference type="ProteomicsDB" id="265160"/>
<dbReference type="Pumba" id="Q8R1P4"/>
<dbReference type="DNASU" id="66795"/>
<dbReference type="GeneID" id="66795"/>
<dbReference type="KEGG" id="mmu:66795"/>
<dbReference type="UCSC" id="uc007rjr.1">
    <property type="organism name" value="mouse"/>
</dbReference>
<dbReference type="AGR" id="MGI:1914045"/>
<dbReference type="CTD" id="83734"/>
<dbReference type="MGI" id="MGI:1914045">
    <property type="gene designation" value="Atg10"/>
</dbReference>
<dbReference type="eggNOG" id="KOG4741">
    <property type="taxonomic scope" value="Eukaryota"/>
</dbReference>
<dbReference type="InParanoid" id="Q8R1P4"/>
<dbReference type="OrthoDB" id="4089664at2759"/>
<dbReference type="PhylomeDB" id="Q8R1P4"/>
<dbReference type="TreeFam" id="TF314016"/>
<dbReference type="Reactome" id="R-MMU-1632852">
    <property type="pathway name" value="Macroautophagy"/>
</dbReference>
<dbReference type="BioGRID-ORCS" id="66795">
    <property type="hits" value="19 hits in 77 CRISPR screens"/>
</dbReference>
<dbReference type="ChiTaRS" id="Atg10">
    <property type="organism name" value="mouse"/>
</dbReference>
<dbReference type="PRO" id="PR:Q8R1P4"/>
<dbReference type="Proteomes" id="UP000000589">
    <property type="component" value="Unplaced"/>
</dbReference>
<dbReference type="RNAct" id="Q8R1P4">
    <property type="molecule type" value="protein"/>
</dbReference>
<dbReference type="GO" id="GO:0005829">
    <property type="term" value="C:cytosol"/>
    <property type="evidence" value="ECO:0000304"/>
    <property type="project" value="Reactome"/>
</dbReference>
<dbReference type="GO" id="GO:0061651">
    <property type="term" value="F:Atg12 conjugating enzyme activity"/>
    <property type="evidence" value="ECO:0000314"/>
    <property type="project" value="FlyBase"/>
</dbReference>
<dbReference type="GO" id="GO:0019777">
    <property type="term" value="F:Atg12 transferase activity"/>
    <property type="evidence" value="ECO:0000315"/>
    <property type="project" value="UniProtKB"/>
</dbReference>
<dbReference type="GO" id="GO:0006914">
    <property type="term" value="P:autophagy"/>
    <property type="evidence" value="ECO:0007669"/>
    <property type="project" value="UniProtKB-KW"/>
</dbReference>
<dbReference type="GO" id="GO:0015031">
    <property type="term" value="P:protein transport"/>
    <property type="evidence" value="ECO:0007669"/>
    <property type="project" value="UniProtKB-KW"/>
</dbReference>
<dbReference type="FunFam" id="3.30.1460.50:FF:000002">
    <property type="entry name" value="Autophagy related 10"/>
    <property type="match status" value="1"/>
</dbReference>
<dbReference type="Gene3D" id="3.30.1460.50">
    <property type="match status" value="1"/>
</dbReference>
<dbReference type="InterPro" id="IPR007135">
    <property type="entry name" value="Atg3/Atg10"/>
</dbReference>
<dbReference type="PANTHER" id="PTHR14957">
    <property type="entry name" value="UBIQUITIN-LIKE-CONJUGATING ENZYME ATG10"/>
    <property type="match status" value="1"/>
</dbReference>
<dbReference type="PANTHER" id="PTHR14957:SF1">
    <property type="entry name" value="UBIQUITIN-LIKE-CONJUGATING ENZYME ATG10"/>
    <property type="match status" value="1"/>
</dbReference>
<dbReference type="Pfam" id="PF03987">
    <property type="entry name" value="Autophagy_act_C"/>
    <property type="match status" value="1"/>
</dbReference>
<sequence length="215" mass="24577">MEDEFFGEKSFQHYCAEFIRHSQQIGDGWEWRTAKECSDGYMCKTQFRIKNEASTPHVGTPASVLTCLPTEENLELPMDDSEVTRPAAVAEVIKHEYHVLYSCSYQVPVLYFRASFLDGRPLALEDIWEGVHECYKPRLLQGPWDTITQQEHPILGQPFFVLHPCKTNEFMTAVLKNSQKINRNVNYITSWLSLVGPVVGLNLPLSYAKATSQSE</sequence>
<feature type="chain" id="PRO_0000096184" description="Ubiquitin-like-conjugating enzyme ATG10">
    <location>
        <begin position="1"/>
        <end position="215"/>
    </location>
</feature>
<feature type="active site" description="Glycyl thioester intermediate" evidence="5">
    <location>
        <position position="165"/>
    </location>
</feature>
<feature type="mutagenesis site" description="Instead of the formation of an intermediate complex with a thiol ester bond between ATG10 (E2-like enzyme) and ATG12 (substrate), a stable complex with an O-ester bond is formed. Does not affect ATG12 conjugation to ATG3." evidence="1 2 3">
    <original>C</original>
    <variation>S</variation>
    <location>
        <position position="165"/>
    </location>
</feature>
<feature type="sequence conflict" description="In Ref. 3; BAB30705." evidence="5" ref="3">
    <original>M</original>
    <variation>I</variation>
    <location>
        <position position="42"/>
    </location>
</feature>
<feature type="sequence conflict" description="In Ref. 2; BAC77060 and 3; BAB30705/BAC36756." evidence="5" ref="2 3">
    <original>AS</original>
    <variation>TL</variation>
    <location>
        <begin position="53"/>
        <end position="54"/>
    </location>
</feature>
<feature type="sequence conflict" description="In Ref. 2; BAC77060 and 3; BAB30705/BAC36756." evidence="5" ref="2 3">
    <location>
        <begin position="58"/>
        <end position="61"/>
    </location>
</feature>
<organism>
    <name type="scientific">Mus musculus</name>
    <name type="common">Mouse</name>
    <dbReference type="NCBI Taxonomy" id="10090"/>
    <lineage>
        <taxon>Eukaryota</taxon>
        <taxon>Metazoa</taxon>
        <taxon>Chordata</taxon>
        <taxon>Craniata</taxon>
        <taxon>Vertebrata</taxon>
        <taxon>Euteleostomi</taxon>
        <taxon>Mammalia</taxon>
        <taxon>Eutheria</taxon>
        <taxon>Euarchontoglires</taxon>
        <taxon>Glires</taxon>
        <taxon>Rodentia</taxon>
        <taxon>Myomorpha</taxon>
        <taxon>Muroidea</taxon>
        <taxon>Muridae</taxon>
        <taxon>Murinae</taxon>
        <taxon>Mus</taxon>
        <taxon>Mus</taxon>
    </lineage>
</organism>
<comment type="function">
    <text evidence="2 3 4">E2-like enzyme involved in autophagy. Acts as an E2-like enzyme that catalyzes the conjugation of ATG12 to ATG5. ATG12 conjugation to ATG5 is required for autophagy. Likely serves as an ATG5-recognition molecule. Not involved in ATG12 conjugation to ATG3. Plays a role in adenovirus-mediated cell lysis.</text>
</comment>
<comment type="subunit">
    <text evidence="1 2">Interacts with MAP1LC3A. By interacting with MAP1LC3A, it plays a role in the conjugation of ATG12 to ATG5. Also able to directly interact either with ATG5 or ATG7.</text>
</comment>
<comment type="subcellular location">
    <subcellularLocation>
        <location evidence="5">Cytoplasm</location>
    </subcellularLocation>
</comment>
<comment type="similarity">
    <text evidence="5">Belongs to the ATG10 family.</text>
</comment>
<protein>
    <recommendedName>
        <fullName>Ubiquitin-like-conjugating enzyme ATG10</fullName>
        <ecNumber>2.3.2.-</ecNumber>
    </recommendedName>
    <alternativeName>
        <fullName>Autophagy-related protein 10</fullName>
        <shortName>APG10-like</shortName>
        <shortName>mAPG10</shortName>
    </alternativeName>
</protein>
<gene>
    <name type="primary">Atg10</name>
    <name type="synonym">Apg10l</name>
</gene>
<reference key="1">
    <citation type="journal article" date="2002" name="FEBS Lett.">
        <title>Mouse Apg10 as an Apg12-conjugating enzyme: analysis by the conjugation-mediated yeast two-hybrid method.</title>
        <authorList>
            <person name="Mizushima N."/>
            <person name="Yoshimori T."/>
            <person name="Ohsumi Y."/>
        </authorList>
    </citation>
    <scope>NUCLEOTIDE SEQUENCE [MRNA]</scope>
    <scope>INTERACTION WITH ATG12; ATG5 AND ATG7</scope>
    <scope>MUTAGENESIS OF CYS-165</scope>
</reference>
<reference key="2">
    <citation type="journal article" date="2003" name="J. Biol. Chem.">
        <title>The mouse APG10 homologue, an E2-like enzyme for Apg12p conjugation, facilitates MAP-LC3 modification.</title>
        <authorList>
            <person name="Nemoto T."/>
            <person name="Tanida I."/>
            <person name="Tanida-Miyake E."/>
            <person name="Minematsu-Ikeguchi N."/>
            <person name="Yokota M."/>
            <person name="Ohsumi M."/>
            <person name="Ueno T."/>
            <person name="Kominami E."/>
        </authorList>
    </citation>
    <scope>NUCLEOTIDE SEQUENCE [MRNA]</scope>
    <scope>FUNCTION</scope>
    <scope>INTERACTION WITH ATG12 AND MAP1LC3A</scope>
    <scope>MUTAGENESIS OF CYS-165</scope>
    <source>
        <tissue>Brain</tissue>
    </source>
</reference>
<reference key="3">
    <citation type="journal article" date="2005" name="Science">
        <title>The transcriptional landscape of the mammalian genome.</title>
        <authorList>
            <person name="Carninci P."/>
            <person name="Kasukawa T."/>
            <person name="Katayama S."/>
            <person name="Gough J."/>
            <person name="Frith M.C."/>
            <person name="Maeda N."/>
            <person name="Oyama R."/>
            <person name="Ravasi T."/>
            <person name="Lenhard B."/>
            <person name="Wells C."/>
            <person name="Kodzius R."/>
            <person name="Shimokawa K."/>
            <person name="Bajic V.B."/>
            <person name="Brenner S.E."/>
            <person name="Batalov S."/>
            <person name="Forrest A.R."/>
            <person name="Zavolan M."/>
            <person name="Davis M.J."/>
            <person name="Wilming L.G."/>
            <person name="Aidinis V."/>
            <person name="Allen J.E."/>
            <person name="Ambesi-Impiombato A."/>
            <person name="Apweiler R."/>
            <person name="Aturaliya R.N."/>
            <person name="Bailey T.L."/>
            <person name="Bansal M."/>
            <person name="Baxter L."/>
            <person name="Beisel K.W."/>
            <person name="Bersano T."/>
            <person name="Bono H."/>
            <person name="Chalk A.M."/>
            <person name="Chiu K.P."/>
            <person name="Choudhary V."/>
            <person name="Christoffels A."/>
            <person name="Clutterbuck D.R."/>
            <person name="Crowe M.L."/>
            <person name="Dalla E."/>
            <person name="Dalrymple B.P."/>
            <person name="de Bono B."/>
            <person name="Della Gatta G."/>
            <person name="di Bernardo D."/>
            <person name="Down T."/>
            <person name="Engstrom P."/>
            <person name="Fagiolini M."/>
            <person name="Faulkner G."/>
            <person name="Fletcher C.F."/>
            <person name="Fukushima T."/>
            <person name="Furuno M."/>
            <person name="Futaki S."/>
            <person name="Gariboldi M."/>
            <person name="Georgii-Hemming P."/>
            <person name="Gingeras T.R."/>
            <person name="Gojobori T."/>
            <person name="Green R.E."/>
            <person name="Gustincich S."/>
            <person name="Harbers M."/>
            <person name="Hayashi Y."/>
            <person name="Hensch T.K."/>
            <person name="Hirokawa N."/>
            <person name="Hill D."/>
            <person name="Huminiecki L."/>
            <person name="Iacono M."/>
            <person name="Ikeo K."/>
            <person name="Iwama A."/>
            <person name="Ishikawa T."/>
            <person name="Jakt M."/>
            <person name="Kanapin A."/>
            <person name="Katoh M."/>
            <person name="Kawasawa Y."/>
            <person name="Kelso J."/>
            <person name="Kitamura H."/>
            <person name="Kitano H."/>
            <person name="Kollias G."/>
            <person name="Krishnan S.P."/>
            <person name="Kruger A."/>
            <person name="Kummerfeld S.K."/>
            <person name="Kurochkin I.V."/>
            <person name="Lareau L.F."/>
            <person name="Lazarevic D."/>
            <person name="Lipovich L."/>
            <person name="Liu J."/>
            <person name="Liuni S."/>
            <person name="McWilliam S."/>
            <person name="Madan Babu M."/>
            <person name="Madera M."/>
            <person name="Marchionni L."/>
            <person name="Matsuda H."/>
            <person name="Matsuzawa S."/>
            <person name="Miki H."/>
            <person name="Mignone F."/>
            <person name="Miyake S."/>
            <person name="Morris K."/>
            <person name="Mottagui-Tabar S."/>
            <person name="Mulder N."/>
            <person name="Nakano N."/>
            <person name="Nakauchi H."/>
            <person name="Ng P."/>
            <person name="Nilsson R."/>
            <person name="Nishiguchi S."/>
            <person name="Nishikawa S."/>
            <person name="Nori F."/>
            <person name="Ohara O."/>
            <person name="Okazaki Y."/>
            <person name="Orlando V."/>
            <person name="Pang K.C."/>
            <person name="Pavan W.J."/>
            <person name="Pavesi G."/>
            <person name="Pesole G."/>
            <person name="Petrovsky N."/>
            <person name="Piazza S."/>
            <person name="Reed J."/>
            <person name="Reid J.F."/>
            <person name="Ring B.Z."/>
            <person name="Ringwald M."/>
            <person name="Rost B."/>
            <person name="Ruan Y."/>
            <person name="Salzberg S.L."/>
            <person name="Sandelin A."/>
            <person name="Schneider C."/>
            <person name="Schoenbach C."/>
            <person name="Sekiguchi K."/>
            <person name="Semple C.A."/>
            <person name="Seno S."/>
            <person name="Sessa L."/>
            <person name="Sheng Y."/>
            <person name="Shibata Y."/>
            <person name="Shimada H."/>
            <person name="Shimada K."/>
            <person name="Silva D."/>
            <person name="Sinclair B."/>
            <person name="Sperling S."/>
            <person name="Stupka E."/>
            <person name="Sugiura K."/>
            <person name="Sultana R."/>
            <person name="Takenaka Y."/>
            <person name="Taki K."/>
            <person name="Tammoja K."/>
            <person name="Tan S.L."/>
            <person name="Tang S."/>
            <person name="Taylor M.S."/>
            <person name="Tegner J."/>
            <person name="Teichmann S.A."/>
            <person name="Ueda H.R."/>
            <person name="van Nimwegen E."/>
            <person name="Verardo R."/>
            <person name="Wei C.L."/>
            <person name="Yagi K."/>
            <person name="Yamanishi H."/>
            <person name="Zabarovsky E."/>
            <person name="Zhu S."/>
            <person name="Zimmer A."/>
            <person name="Hide W."/>
            <person name="Bult C."/>
            <person name="Grimmond S.M."/>
            <person name="Teasdale R.D."/>
            <person name="Liu E.T."/>
            <person name="Brusic V."/>
            <person name="Quackenbush J."/>
            <person name="Wahlestedt C."/>
            <person name="Mattick J.S."/>
            <person name="Hume D.A."/>
            <person name="Kai C."/>
            <person name="Sasaki D."/>
            <person name="Tomaru Y."/>
            <person name="Fukuda S."/>
            <person name="Kanamori-Katayama M."/>
            <person name="Suzuki M."/>
            <person name="Aoki J."/>
            <person name="Arakawa T."/>
            <person name="Iida J."/>
            <person name="Imamura K."/>
            <person name="Itoh M."/>
            <person name="Kato T."/>
            <person name="Kawaji H."/>
            <person name="Kawagashira N."/>
            <person name="Kawashima T."/>
            <person name="Kojima M."/>
            <person name="Kondo S."/>
            <person name="Konno H."/>
            <person name="Nakano K."/>
            <person name="Ninomiya N."/>
            <person name="Nishio T."/>
            <person name="Okada M."/>
            <person name="Plessy C."/>
            <person name="Shibata K."/>
            <person name="Shiraki T."/>
            <person name="Suzuki S."/>
            <person name="Tagami M."/>
            <person name="Waki K."/>
            <person name="Watahiki A."/>
            <person name="Okamura-Oho Y."/>
            <person name="Suzuki H."/>
            <person name="Kawai J."/>
            <person name="Hayashizaki Y."/>
        </authorList>
    </citation>
    <scope>NUCLEOTIDE SEQUENCE [LARGE SCALE MRNA]</scope>
    <source>
        <strain>C57BL/6J</strain>
        <tissue>Head</tissue>
        <tissue>Pituitary</tissue>
    </source>
</reference>
<reference key="4">
    <citation type="journal article" date="2004" name="Genome Res.">
        <title>The status, quality, and expansion of the NIH full-length cDNA project: the Mammalian Gene Collection (MGC).</title>
        <authorList>
            <consortium name="The MGC Project Team"/>
        </authorList>
    </citation>
    <scope>NUCLEOTIDE SEQUENCE [LARGE SCALE MRNA]</scope>
    <source>
        <strain>FVB/N</strain>
        <tissue>Mammary cancer</tissue>
    </source>
</reference>
<reference key="5">
    <citation type="journal article" date="2010" name="Cell">
        <title>ATG12 conjugation to ATG3 regulates mitochondrial homeostasis and cell death.</title>
        <authorList>
            <person name="Radoshevich L."/>
            <person name="Murrow L."/>
            <person name="Chen N."/>
            <person name="Fernandez E."/>
            <person name="Roy S."/>
            <person name="Fung C."/>
            <person name="Debnath J."/>
        </authorList>
    </citation>
    <scope>FUNCTION</scope>
    <scope>MUTAGENESIS OF CYS-165</scope>
</reference>
<reference key="6">
    <citation type="journal article" date="2011" name="J. Virol.">
        <title>Human adenovirus type 5 induces cell lysis through autophagy and autophagy-triggered caspase activity.</title>
        <authorList>
            <person name="Jiang H."/>
            <person name="White E.J."/>
            <person name="Rios-Vicil C.I."/>
            <person name="Xu J."/>
            <person name="Gomez-Manzano C."/>
            <person name="Fueyo J."/>
        </authorList>
    </citation>
    <scope>FUNCTION</scope>
</reference>
<name>ATG10_MOUSE</name>
<proteinExistence type="evidence at protein level"/>
<keyword id="KW-0072">Autophagy</keyword>
<keyword id="KW-0963">Cytoplasm</keyword>
<keyword id="KW-0653">Protein transport</keyword>
<keyword id="KW-1185">Reference proteome</keyword>
<keyword id="KW-0808">Transferase</keyword>
<keyword id="KW-0813">Transport</keyword>
<keyword id="KW-0833">Ubl conjugation pathway</keyword>
<accession>Q8R1P4</accession>
<accession>Q8BPA9</accession>
<accession>Q9D3J7</accession>
<evidence type="ECO:0000269" key="1">
    <source>
    </source>
</evidence>
<evidence type="ECO:0000269" key="2">
    <source>
    </source>
</evidence>
<evidence type="ECO:0000269" key="3">
    <source>
    </source>
</evidence>
<evidence type="ECO:0000269" key="4">
    <source>
    </source>
</evidence>
<evidence type="ECO:0000305" key="5"/>